<gene>
    <name evidence="1" type="primary">rplI</name>
    <name type="ordered locus">SCH_4268</name>
</gene>
<evidence type="ECO:0000255" key="1">
    <source>
        <dbReference type="HAMAP-Rule" id="MF_00503"/>
    </source>
</evidence>
<evidence type="ECO:0000305" key="2"/>
<name>RL9_SALCH</name>
<reference key="1">
    <citation type="journal article" date="2005" name="Nucleic Acids Res.">
        <title>The genome sequence of Salmonella enterica serovar Choleraesuis, a highly invasive and resistant zoonotic pathogen.</title>
        <authorList>
            <person name="Chiu C.-H."/>
            <person name="Tang P."/>
            <person name="Chu C."/>
            <person name="Hu S."/>
            <person name="Bao Q."/>
            <person name="Yu J."/>
            <person name="Chou Y.-Y."/>
            <person name="Wang H.-S."/>
            <person name="Lee Y.-S."/>
        </authorList>
    </citation>
    <scope>NUCLEOTIDE SEQUENCE [LARGE SCALE GENOMIC DNA]</scope>
    <source>
        <strain>SC-B67</strain>
    </source>
</reference>
<proteinExistence type="inferred from homology"/>
<comment type="function">
    <text evidence="1">Binds to the 23S rRNA.</text>
</comment>
<comment type="similarity">
    <text evidence="1">Belongs to the bacterial ribosomal protein bL9 family.</text>
</comment>
<accession>Q57GI8</accession>
<sequence>MQVILLDKVANLGSLGDQVNVKAGYARNFLVPQGKAVPATKKNVEYFEARRAELEAKLADVLAAANARAEKINALETVTIASKAGDEGKLFGSIGTRDIADAVTAAGVDVAKSEVRLPNGVLRTTGEHEVNFQVHSEVFAKVIINVVAE</sequence>
<keyword id="KW-0687">Ribonucleoprotein</keyword>
<keyword id="KW-0689">Ribosomal protein</keyword>
<keyword id="KW-0694">RNA-binding</keyword>
<keyword id="KW-0699">rRNA-binding</keyword>
<organism>
    <name type="scientific">Salmonella choleraesuis (strain SC-B67)</name>
    <dbReference type="NCBI Taxonomy" id="321314"/>
    <lineage>
        <taxon>Bacteria</taxon>
        <taxon>Pseudomonadati</taxon>
        <taxon>Pseudomonadota</taxon>
        <taxon>Gammaproteobacteria</taxon>
        <taxon>Enterobacterales</taxon>
        <taxon>Enterobacteriaceae</taxon>
        <taxon>Salmonella</taxon>
    </lineage>
</organism>
<protein>
    <recommendedName>
        <fullName evidence="1">Large ribosomal subunit protein bL9</fullName>
    </recommendedName>
    <alternativeName>
        <fullName evidence="2">50S ribosomal protein L9</fullName>
    </alternativeName>
</protein>
<dbReference type="EMBL" id="AE017220">
    <property type="protein sequence ID" value="AAX68174.1"/>
    <property type="molecule type" value="Genomic_DNA"/>
</dbReference>
<dbReference type="RefSeq" id="WP_001196065.1">
    <property type="nucleotide sequence ID" value="NC_006905.1"/>
</dbReference>
<dbReference type="SMR" id="Q57GI8"/>
<dbReference type="GeneID" id="66758618"/>
<dbReference type="KEGG" id="sec:SCH_4268"/>
<dbReference type="HOGENOM" id="CLU_078938_4_1_6"/>
<dbReference type="Proteomes" id="UP000000538">
    <property type="component" value="Chromosome"/>
</dbReference>
<dbReference type="GO" id="GO:1990904">
    <property type="term" value="C:ribonucleoprotein complex"/>
    <property type="evidence" value="ECO:0007669"/>
    <property type="project" value="UniProtKB-KW"/>
</dbReference>
<dbReference type="GO" id="GO:0005840">
    <property type="term" value="C:ribosome"/>
    <property type="evidence" value="ECO:0007669"/>
    <property type="project" value="UniProtKB-KW"/>
</dbReference>
<dbReference type="GO" id="GO:0019843">
    <property type="term" value="F:rRNA binding"/>
    <property type="evidence" value="ECO:0007669"/>
    <property type="project" value="UniProtKB-UniRule"/>
</dbReference>
<dbReference type="GO" id="GO:0003735">
    <property type="term" value="F:structural constituent of ribosome"/>
    <property type="evidence" value="ECO:0007669"/>
    <property type="project" value="InterPro"/>
</dbReference>
<dbReference type="GO" id="GO:0006412">
    <property type="term" value="P:translation"/>
    <property type="evidence" value="ECO:0007669"/>
    <property type="project" value="UniProtKB-UniRule"/>
</dbReference>
<dbReference type="FunFam" id="3.10.430.100:FF:000001">
    <property type="entry name" value="50S ribosomal protein L9"/>
    <property type="match status" value="1"/>
</dbReference>
<dbReference type="FunFam" id="3.40.5.10:FF:000001">
    <property type="entry name" value="50S ribosomal protein L9"/>
    <property type="match status" value="1"/>
</dbReference>
<dbReference type="Gene3D" id="3.10.430.100">
    <property type="entry name" value="Ribosomal protein L9, C-terminal domain"/>
    <property type="match status" value="1"/>
</dbReference>
<dbReference type="Gene3D" id="3.40.5.10">
    <property type="entry name" value="Ribosomal protein L9, N-terminal domain"/>
    <property type="match status" value="1"/>
</dbReference>
<dbReference type="HAMAP" id="MF_00503">
    <property type="entry name" value="Ribosomal_bL9"/>
    <property type="match status" value="1"/>
</dbReference>
<dbReference type="InterPro" id="IPR000244">
    <property type="entry name" value="Ribosomal_bL9"/>
</dbReference>
<dbReference type="InterPro" id="IPR009027">
    <property type="entry name" value="Ribosomal_bL9/RNase_H1_N"/>
</dbReference>
<dbReference type="InterPro" id="IPR020594">
    <property type="entry name" value="Ribosomal_bL9_bac/chp"/>
</dbReference>
<dbReference type="InterPro" id="IPR020069">
    <property type="entry name" value="Ribosomal_bL9_C"/>
</dbReference>
<dbReference type="InterPro" id="IPR036791">
    <property type="entry name" value="Ribosomal_bL9_C_sf"/>
</dbReference>
<dbReference type="InterPro" id="IPR020070">
    <property type="entry name" value="Ribosomal_bL9_N"/>
</dbReference>
<dbReference type="InterPro" id="IPR036935">
    <property type="entry name" value="Ribosomal_bL9_N_sf"/>
</dbReference>
<dbReference type="NCBIfam" id="TIGR00158">
    <property type="entry name" value="L9"/>
    <property type="match status" value="1"/>
</dbReference>
<dbReference type="PANTHER" id="PTHR21368">
    <property type="entry name" value="50S RIBOSOMAL PROTEIN L9"/>
    <property type="match status" value="1"/>
</dbReference>
<dbReference type="Pfam" id="PF03948">
    <property type="entry name" value="Ribosomal_L9_C"/>
    <property type="match status" value="1"/>
</dbReference>
<dbReference type="Pfam" id="PF01281">
    <property type="entry name" value="Ribosomal_L9_N"/>
    <property type="match status" value="1"/>
</dbReference>
<dbReference type="SUPFAM" id="SSF55658">
    <property type="entry name" value="L9 N-domain-like"/>
    <property type="match status" value="1"/>
</dbReference>
<dbReference type="SUPFAM" id="SSF55653">
    <property type="entry name" value="Ribosomal protein L9 C-domain"/>
    <property type="match status" value="1"/>
</dbReference>
<dbReference type="PROSITE" id="PS00651">
    <property type="entry name" value="RIBOSOMAL_L9"/>
    <property type="match status" value="1"/>
</dbReference>
<feature type="chain" id="PRO_0000236582" description="Large ribosomal subunit protein bL9">
    <location>
        <begin position="1"/>
        <end position="149"/>
    </location>
</feature>